<evidence type="ECO:0000255" key="1">
    <source>
        <dbReference type="HAMAP-Rule" id="MF_00272"/>
    </source>
</evidence>
<evidence type="ECO:0000255" key="2">
    <source>
        <dbReference type="PROSITE-ProRule" id="PRU01066"/>
    </source>
</evidence>
<feature type="chain" id="PRO_1000114495" description="Glycine cleavage system H protein">
    <location>
        <begin position="1"/>
        <end position="129"/>
    </location>
</feature>
<feature type="domain" description="Lipoyl-binding" evidence="2">
    <location>
        <begin position="24"/>
        <end position="106"/>
    </location>
</feature>
<feature type="modified residue" description="N6-lipoyllysine" evidence="1">
    <location>
        <position position="65"/>
    </location>
</feature>
<keyword id="KW-0450">Lipoyl</keyword>
<dbReference type="EMBL" id="CP001103">
    <property type="protein sequence ID" value="AEA99020.1"/>
    <property type="molecule type" value="Genomic_DNA"/>
</dbReference>
<dbReference type="RefSeq" id="WP_012519312.1">
    <property type="nucleotide sequence ID" value="NC_011138.3"/>
</dbReference>
<dbReference type="SMR" id="B4RSJ6"/>
<dbReference type="GeneID" id="56343262"/>
<dbReference type="KEGG" id="amc:MADE_1014430"/>
<dbReference type="HOGENOM" id="CLU_097408_2_0_6"/>
<dbReference type="Proteomes" id="UP000001870">
    <property type="component" value="Chromosome"/>
</dbReference>
<dbReference type="GO" id="GO:0005829">
    <property type="term" value="C:cytosol"/>
    <property type="evidence" value="ECO:0007669"/>
    <property type="project" value="TreeGrafter"/>
</dbReference>
<dbReference type="GO" id="GO:0005960">
    <property type="term" value="C:glycine cleavage complex"/>
    <property type="evidence" value="ECO:0007669"/>
    <property type="project" value="InterPro"/>
</dbReference>
<dbReference type="GO" id="GO:0019464">
    <property type="term" value="P:glycine decarboxylation via glycine cleavage system"/>
    <property type="evidence" value="ECO:0007669"/>
    <property type="project" value="UniProtKB-UniRule"/>
</dbReference>
<dbReference type="CDD" id="cd06848">
    <property type="entry name" value="GCS_H"/>
    <property type="match status" value="1"/>
</dbReference>
<dbReference type="FunFam" id="2.40.50.100:FF:000011">
    <property type="entry name" value="Glycine cleavage system H protein"/>
    <property type="match status" value="1"/>
</dbReference>
<dbReference type="Gene3D" id="2.40.50.100">
    <property type="match status" value="1"/>
</dbReference>
<dbReference type="HAMAP" id="MF_00272">
    <property type="entry name" value="GcvH"/>
    <property type="match status" value="1"/>
</dbReference>
<dbReference type="InterPro" id="IPR003016">
    <property type="entry name" value="2-oxoA_DH_lipoyl-BS"/>
</dbReference>
<dbReference type="InterPro" id="IPR000089">
    <property type="entry name" value="Biotin_lipoyl"/>
</dbReference>
<dbReference type="InterPro" id="IPR002930">
    <property type="entry name" value="GCV_H"/>
</dbReference>
<dbReference type="InterPro" id="IPR033753">
    <property type="entry name" value="GCV_H/Fam206"/>
</dbReference>
<dbReference type="InterPro" id="IPR017453">
    <property type="entry name" value="GCV_H_sub"/>
</dbReference>
<dbReference type="InterPro" id="IPR011053">
    <property type="entry name" value="Single_hybrid_motif"/>
</dbReference>
<dbReference type="NCBIfam" id="TIGR00527">
    <property type="entry name" value="gcvH"/>
    <property type="match status" value="1"/>
</dbReference>
<dbReference type="NCBIfam" id="NF002270">
    <property type="entry name" value="PRK01202.1"/>
    <property type="match status" value="1"/>
</dbReference>
<dbReference type="PANTHER" id="PTHR11715">
    <property type="entry name" value="GLYCINE CLEAVAGE SYSTEM H PROTEIN"/>
    <property type="match status" value="1"/>
</dbReference>
<dbReference type="PANTHER" id="PTHR11715:SF3">
    <property type="entry name" value="GLYCINE CLEAVAGE SYSTEM H PROTEIN-RELATED"/>
    <property type="match status" value="1"/>
</dbReference>
<dbReference type="Pfam" id="PF01597">
    <property type="entry name" value="GCV_H"/>
    <property type="match status" value="1"/>
</dbReference>
<dbReference type="SUPFAM" id="SSF51230">
    <property type="entry name" value="Single hybrid motif"/>
    <property type="match status" value="1"/>
</dbReference>
<dbReference type="PROSITE" id="PS50968">
    <property type="entry name" value="BIOTINYL_LIPOYL"/>
    <property type="match status" value="1"/>
</dbReference>
<dbReference type="PROSITE" id="PS00189">
    <property type="entry name" value="LIPOYL"/>
    <property type="match status" value="1"/>
</dbReference>
<accession>B4RSJ6</accession>
<accession>F2GBH4</accession>
<comment type="function">
    <text evidence="1">The glycine cleavage system catalyzes the degradation of glycine. The H protein shuttles the methylamine group of glycine from the P protein to the T protein.</text>
</comment>
<comment type="cofactor">
    <cofactor evidence="1">
        <name>(R)-lipoate</name>
        <dbReference type="ChEBI" id="CHEBI:83088"/>
    </cofactor>
    <text evidence="1">Binds 1 lipoyl cofactor covalently.</text>
</comment>
<comment type="subunit">
    <text evidence="1">The glycine cleavage system is composed of four proteins: P, T, L and H.</text>
</comment>
<comment type="similarity">
    <text evidence="1">Belongs to the GcvH family.</text>
</comment>
<sequence>MSNIPTDLRYAATHEWVRPEGDGVFTVGISEHAQGLLGDMVFVELPDVGDAVSTGDDICVAESVKAASDVYAPISGEVVEVNEDLEDSPELVNSDPYGDGWLFKIKADDAAEVEGLLDAEGYENSIDEE</sequence>
<name>GCSH_ALTMD</name>
<reference key="1">
    <citation type="journal article" date="2008" name="ISME J.">
        <title>Comparative genomics of two ecotypes of the marine planktonic copiotroph Alteromonas macleodii suggests alternative lifestyles associated with different kinds of particulate organic matter.</title>
        <authorList>
            <person name="Ivars-Martinez E."/>
            <person name="Martin-Cuadrado A.-B."/>
            <person name="D'Auria G."/>
            <person name="Mira A."/>
            <person name="Ferriera S."/>
            <person name="Johnson J."/>
            <person name="Friedman R."/>
            <person name="Rodriguez-Valera F."/>
        </authorList>
    </citation>
    <scope>NUCLEOTIDE SEQUENCE [LARGE SCALE GENOMIC DNA]</scope>
    <source>
        <strain>DSM 17117 / CIP 110805 / LMG 28347 / Deep ecotype</strain>
    </source>
</reference>
<proteinExistence type="inferred from homology"/>
<organism>
    <name type="scientific">Alteromonas mediterranea (strain DSM 17117 / CIP 110805 / LMG 28347 / Deep ecotype)</name>
    <dbReference type="NCBI Taxonomy" id="1774373"/>
    <lineage>
        <taxon>Bacteria</taxon>
        <taxon>Pseudomonadati</taxon>
        <taxon>Pseudomonadota</taxon>
        <taxon>Gammaproteobacteria</taxon>
        <taxon>Alteromonadales</taxon>
        <taxon>Alteromonadaceae</taxon>
        <taxon>Alteromonas/Salinimonas group</taxon>
        <taxon>Alteromonas</taxon>
    </lineage>
</organism>
<protein>
    <recommendedName>
        <fullName evidence="1">Glycine cleavage system H protein</fullName>
    </recommendedName>
</protein>
<gene>
    <name evidence="1" type="primary">gcvH</name>
    <name type="ordered locus">MADE_1014430</name>
</gene>